<evidence type="ECO:0000255" key="1">
    <source>
        <dbReference type="HAMAP-Rule" id="MF_01337"/>
    </source>
</evidence>
<evidence type="ECO:0000256" key="2">
    <source>
        <dbReference type="SAM" id="MobiDB-lite"/>
    </source>
</evidence>
<evidence type="ECO:0000305" key="3"/>
<dbReference type="EMBL" id="CP000252">
    <property type="protein sequence ID" value="ABC76197.1"/>
    <property type="molecule type" value="Genomic_DNA"/>
</dbReference>
<dbReference type="RefSeq" id="WP_011416231.1">
    <property type="nucleotide sequence ID" value="NC_007759.1"/>
</dbReference>
<dbReference type="SMR" id="Q2LQC1"/>
<dbReference type="FunCoup" id="Q2LQC1">
    <property type="interactions" value="569"/>
</dbReference>
<dbReference type="STRING" id="56780.SYN_01591"/>
<dbReference type="KEGG" id="sat:SYN_01591"/>
<dbReference type="eggNOG" id="COG0256">
    <property type="taxonomic scope" value="Bacteria"/>
</dbReference>
<dbReference type="HOGENOM" id="CLU_098841_0_1_7"/>
<dbReference type="InParanoid" id="Q2LQC1"/>
<dbReference type="OrthoDB" id="9810939at2"/>
<dbReference type="Proteomes" id="UP000001933">
    <property type="component" value="Chromosome"/>
</dbReference>
<dbReference type="GO" id="GO:0022625">
    <property type="term" value="C:cytosolic large ribosomal subunit"/>
    <property type="evidence" value="ECO:0007669"/>
    <property type="project" value="TreeGrafter"/>
</dbReference>
<dbReference type="GO" id="GO:0008097">
    <property type="term" value="F:5S rRNA binding"/>
    <property type="evidence" value="ECO:0007669"/>
    <property type="project" value="TreeGrafter"/>
</dbReference>
<dbReference type="GO" id="GO:0003735">
    <property type="term" value="F:structural constituent of ribosome"/>
    <property type="evidence" value="ECO:0007669"/>
    <property type="project" value="InterPro"/>
</dbReference>
<dbReference type="GO" id="GO:0006412">
    <property type="term" value="P:translation"/>
    <property type="evidence" value="ECO:0007669"/>
    <property type="project" value="UniProtKB-UniRule"/>
</dbReference>
<dbReference type="CDD" id="cd00432">
    <property type="entry name" value="Ribosomal_L18_L5e"/>
    <property type="match status" value="1"/>
</dbReference>
<dbReference type="FunFam" id="3.30.420.100:FF:000001">
    <property type="entry name" value="50S ribosomal protein L18"/>
    <property type="match status" value="1"/>
</dbReference>
<dbReference type="Gene3D" id="3.30.420.100">
    <property type="match status" value="1"/>
</dbReference>
<dbReference type="HAMAP" id="MF_01337_B">
    <property type="entry name" value="Ribosomal_uL18_B"/>
    <property type="match status" value="1"/>
</dbReference>
<dbReference type="InterPro" id="IPR004389">
    <property type="entry name" value="Ribosomal_uL18_bac-type"/>
</dbReference>
<dbReference type="InterPro" id="IPR005484">
    <property type="entry name" value="Ribosomal_uL18_bac/euk"/>
</dbReference>
<dbReference type="NCBIfam" id="TIGR00060">
    <property type="entry name" value="L18_bact"/>
    <property type="match status" value="1"/>
</dbReference>
<dbReference type="PANTHER" id="PTHR12899">
    <property type="entry name" value="39S RIBOSOMAL PROTEIN L18, MITOCHONDRIAL"/>
    <property type="match status" value="1"/>
</dbReference>
<dbReference type="PANTHER" id="PTHR12899:SF3">
    <property type="entry name" value="LARGE RIBOSOMAL SUBUNIT PROTEIN UL18M"/>
    <property type="match status" value="1"/>
</dbReference>
<dbReference type="Pfam" id="PF00861">
    <property type="entry name" value="Ribosomal_L18p"/>
    <property type="match status" value="1"/>
</dbReference>
<dbReference type="SUPFAM" id="SSF53137">
    <property type="entry name" value="Translational machinery components"/>
    <property type="match status" value="1"/>
</dbReference>
<protein>
    <recommendedName>
        <fullName evidence="1">Large ribosomal subunit protein uL18</fullName>
    </recommendedName>
    <alternativeName>
        <fullName evidence="3">50S ribosomal protein L18</fullName>
    </alternativeName>
</protein>
<feature type="chain" id="PRO_0000251387" description="Large ribosomal subunit protein uL18">
    <location>
        <begin position="1"/>
        <end position="121"/>
    </location>
</feature>
<feature type="region of interest" description="Disordered" evidence="2">
    <location>
        <begin position="1"/>
        <end position="23"/>
    </location>
</feature>
<feature type="compositionally biased region" description="Basic residues" evidence="2">
    <location>
        <begin position="1"/>
        <end position="19"/>
    </location>
</feature>
<proteinExistence type="inferred from homology"/>
<sequence>MASKKVQKIRDKRKARVRAKISGSTERPRLSVFRSSKHIYVQAVADNEGKTIAHSSTISDDVKSKITDVKKVEAAKEVGRSISRKLRDMGIQEVVFDRGSYLYHGRVKALADGAREEGLKF</sequence>
<keyword id="KW-1185">Reference proteome</keyword>
<keyword id="KW-0687">Ribonucleoprotein</keyword>
<keyword id="KW-0689">Ribosomal protein</keyword>
<keyword id="KW-0694">RNA-binding</keyword>
<keyword id="KW-0699">rRNA-binding</keyword>
<reference key="1">
    <citation type="journal article" date="2007" name="Proc. Natl. Acad. Sci. U.S.A.">
        <title>The genome of Syntrophus aciditrophicus: life at the thermodynamic limit of microbial growth.</title>
        <authorList>
            <person name="McInerney M.J."/>
            <person name="Rohlin L."/>
            <person name="Mouttaki H."/>
            <person name="Kim U."/>
            <person name="Krupp R.S."/>
            <person name="Rios-Hernandez L."/>
            <person name="Sieber J."/>
            <person name="Struchtemeyer C.G."/>
            <person name="Bhattacharyya A."/>
            <person name="Campbell J.W."/>
            <person name="Gunsalus R.P."/>
        </authorList>
    </citation>
    <scope>NUCLEOTIDE SEQUENCE [LARGE SCALE GENOMIC DNA]</scope>
    <source>
        <strain>SB</strain>
    </source>
</reference>
<name>RL18_SYNAS</name>
<organism>
    <name type="scientific">Syntrophus aciditrophicus (strain SB)</name>
    <dbReference type="NCBI Taxonomy" id="56780"/>
    <lineage>
        <taxon>Bacteria</taxon>
        <taxon>Pseudomonadati</taxon>
        <taxon>Thermodesulfobacteriota</taxon>
        <taxon>Syntrophia</taxon>
        <taxon>Syntrophales</taxon>
        <taxon>Syntrophaceae</taxon>
        <taxon>Syntrophus</taxon>
    </lineage>
</organism>
<comment type="function">
    <text evidence="1">This is one of the proteins that bind and probably mediate the attachment of the 5S RNA into the large ribosomal subunit, where it forms part of the central protuberance.</text>
</comment>
<comment type="subunit">
    <text evidence="1">Part of the 50S ribosomal subunit; part of the 5S rRNA/L5/L18/L25 subcomplex. Contacts the 5S and 23S rRNAs.</text>
</comment>
<comment type="similarity">
    <text evidence="1">Belongs to the universal ribosomal protein uL18 family.</text>
</comment>
<gene>
    <name evidence="1" type="primary">rplR</name>
    <name type="ordered locus">SYNAS_03180</name>
    <name type="ORF">SYN_01591</name>
</gene>
<accession>Q2LQC1</accession>